<gene>
    <name type="primary">rpsF</name>
    <name type="ordered locus">ML2685</name>
    <name type="ORF">MLCB1913.21c</name>
</gene>
<keyword id="KW-1185">Reference proteome</keyword>
<keyword id="KW-0687">Ribonucleoprotein</keyword>
<keyword id="KW-0689">Ribosomal protein</keyword>
<keyword id="KW-0694">RNA-binding</keyword>
<keyword id="KW-0699">rRNA-binding</keyword>
<comment type="function">
    <text evidence="1">Binds together with bS18 to 16S ribosomal RNA.</text>
</comment>
<comment type="similarity">
    <text evidence="2">Belongs to the bacterial ribosomal protein bS6 family.</text>
</comment>
<dbReference type="EMBL" id="L39923">
    <property type="protein sequence ID" value="AAB53121.1"/>
    <property type="molecule type" value="Genomic_DNA"/>
</dbReference>
<dbReference type="EMBL" id="AL022118">
    <property type="protein sequence ID" value="CAA17954.1"/>
    <property type="molecule type" value="Genomic_DNA"/>
</dbReference>
<dbReference type="EMBL" id="AL583926">
    <property type="protein sequence ID" value="CAC32217.1"/>
    <property type="molecule type" value="Genomic_DNA"/>
</dbReference>
<dbReference type="PIR" id="C87245">
    <property type="entry name" value="C87245"/>
</dbReference>
<dbReference type="RefSeq" id="NP_302713.1">
    <property type="nucleotide sequence ID" value="NC_002677.1"/>
</dbReference>
<dbReference type="RefSeq" id="WP_010909032.1">
    <property type="nucleotide sequence ID" value="NC_002677.1"/>
</dbReference>
<dbReference type="SMR" id="P46389"/>
<dbReference type="STRING" id="272631.gene:17576551"/>
<dbReference type="KEGG" id="mle:ML2685"/>
<dbReference type="PATRIC" id="fig|272631.5.peg.5177"/>
<dbReference type="Leproma" id="ML2685"/>
<dbReference type="eggNOG" id="COG0360">
    <property type="taxonomic scope" value="Bacteria"/>
</dbReference>
<dbReference type="HOGENOM" id="CLU_113441_5_3_11"/>
<dbReference type="OrthoDB" id="9812702at2"/>
<dbReference type="Proteomes" id="UP000000806">
    <property type="component" value="Chromosome"/>
</dbReference>
<dbReference type="GO" id="GO:0005737">
    <property type="term" value="C:cytoplasm"/>
    <property type="evidence" value="ECO:0007669"/>
    <property type="project" value="UniProtKB-ARBA"/>
</dbReference>
<dbReference type="GO" id="GO:1990904">
    <property type="term" value="C:ribonucleoprotein complex"/>
    <property type="evidence" value="ECO:0007669"/>
    <property type="project" value="UniProtKB-KW"/>
</dbReference>
<dbReference type="GO" id="GO:0005840">
    <property type="term" value="C:ribosome"/>
    <property type="evidence" value="ECO:0007669"/>
    <property type="project" value="UniProtKB-KW"/>
</dbReference>
<dbReference type="GO" id="GO:0070181">
    <property type="term" value="F:small ribosomal subunit rRNA binding"/>
    <property type="evidence" value="ECO:0007669"/>
    <property type="project" value="TreeGrafter"/>
</dbReference>
<dbReference type="GO" id="GO:0003735">
    <property type="term" value="F:structural constituent of ribosome"/>
    <property type="evidence" value="ECO:0007669"/>
    <property type="project" value="InterPro"/>
</dbReference>
<dbReference type="GO" id="GO:0006412">
    <property type="term" value="P:translation"/>
    <property type="evidence" value="ECO:0007669"/>
    <property type="project" value="UniProtKB-UniRule"/>
</dbReference>
<dbReference type="CDD" id="cd00473">
    <property type="entry name" value="bS6"/>
    <property type="match status" value="1"/>
</dbReference>
<dbReference type="FunFam" id="3.30.70.60:FF:000002">
    <property type="entry name" value="30S ribosomal protein S6"/>
    <property type="match status" value="1"/>
</dbReference>
<dbReference type="Gene3D" id="3.30.70.60">
    <property type="match status" value="1"/>
</dbReference>
<dbReference type="HAMAP" id="MF_00360">
    <property type="entry name" value="Ribosomal_bS6"/>
    <property type="match status" value="1"/>
</dbReference>
<dbReference type="InterPro" id="IPR000529">
    <property type="entry name" value="Ribosomal_bS6"/>
</dbReference>
<dbReference type="InterPro" id="IPR020815">
    <property type="entry name" value="Ribosomal_bS6_CS"/>
</dbReference>
<dbReference type="InterPro" id="IPR035980">
    <property type="entry name" value="Ribosomal_bS6_sf"/>
</dbReference>
<dbReference type="InterPro" id="IPR020814">
    <property type="entry name" value="Ribosomal_S6_plastid/chlpt"/>
</dbReference>
<dbReference type="InterPro" id="IPR014717">
    <property type="entry name" value="Transl_elong_EF1B/ribsomal_bS6"/>
</dbReference>
<dbReference type="NCBIfam" id="TIGR00166">
    <property type="entry name" value="S6"/>
    <property type="match status" value="1"/>
</dbReference>
<dbReference type="PANTHER" id="PTHR21011">
    <property type="entry name" value="MITOCHONDRIAL 28S RIBOSOMAL PROTEIN S6"/>
    <property type="match status" value="1"/>
</dbReference>
<dbReference type="PANTHER" id="PTHR21011:SF1">
    <property type="entry name" value="SMALL RIBOSOMAL SUBUNIT PROTEIN BS6M"/>
    <property type="match status" value="1"/>
</dbReference>
<dbReference type="Pfam" id="PF01250">
    <property type="entry name" value="Ribosomal_S6"/>
    <property type="match status" value="1"/>
</dbReference>
<dbReference type="SUPFAM" id="SSF54995">
    <property type="entry name" value="Ribosomal protein S6"/>
    <property type="match status" value="1"/>
</dbReference>
<dbReference type="PROSITE" id="PS01048">
    <property type="entry name" value="RIBOSOMAL_S6"/>
    <property type="match status" value="1"/>
</dbReference>
<proteinExistence type="inferred from homology"/>
<accession>P46389</accession>
<sequence>MRPYEIMVILDPTLDECTVGPSLETFLNVVRKDGGAIDKVDIWGRRRLAYEISKHAEGIYVVIDLKAAPATVSELDRQLSLNESVLRTKVMRTDKH</sequence>
<reference key="1">
    <citation type="journal article" date="1996" name="Microbiology">
        <title>Gene arrangement and organization in an approximately 76 kb fragment encompassing the oriC region of the chromosome of Mycobacterium leprae.</title>
        <authorList>
            <person name="Fsihi H."/>
            <person name="de Rossi E."/>
            <person name="Salazar L."/>
            <person name="Cantoni R."/>
            <person name="Labo M."/>
            <person name="Riccardi G."/>
            <person name="Takiff H.E."/>
            <person name="Eiglmeier K."/>
            <person name="Bergh S."/>
            <person name="Cole S.T."/>
        </authorList>
    </citation>
    <scope>NUCLEOTIDE SEQUENCE [GENOMIC DNA]</scope>
</reference>
<reference key="2">
    <citation type="journal article" date="2001" name="Nature">
        <title>Massive gene decay in the leprosy bacillus.</title>
        <authorList>
            <person name="Cole S.T."/>
            <person name="Eiglmeier K."/>
            <person name="Parkhill J."/>
            <person name="James K.D."/>
            <person name="Thomson N.R."/>
            <person name="Wheeler P.R."/>
            <person name="Honore N."/>
            <person name="Garnier T."/>
            <person name="Churcher C.M."/>
            <person name="Harris D.E."/>
            <person name="Mungall K.L."/>
            <person name="Basham D."/>
            <person name="Brown D."/>
            <person name="Chillingworth T."/>
            <person name="Connor R."/>
            <person name="Davies R.M."/>
            <person name="Devlin K."/>
            <person name="Duthoy S."/>
            <person name="Feltwell T."/>
            <person name="Fraser A."/>
            <person name="Hamlin N."/>
            <person name="Holroyd S."/>
            <person name="Hornsby T."/>
            <person name="Jagels K."/>
            <person name="Lacroix C."/>
            <person name="Maclean J."/>
            <person name="Moule S."/>
            <person name="Murphy L.D."/>
            <person name="Oliver K."/>
            <person name="Quail M.A."/>
            <person name="Rajandream M.A."/>
            <person name="Rutherford K.M."/>
            <person name="Rutter S."/>
            <person name="Seeger K."/>
            <person name="Simon S."/>
            <person name="Simmonds M."/>
            <person name="Skelton J."/>
            <person name="Squares R."/>
            <person name="Squares S."/>
            <person name="Stevens K."/>
            <person name="Taylor K."/>
            <person name="Whitehead S."/>
            <person name="Woodward J.R."/>
            <person name="Barrell B.G."/>
        </authorList>
    </citation>
    <scope>NUCLEOTIDE SEQUENCE [LARGE SCALE GENOMIC DNA]</scope>
    <source>
        <strain>TN</strain>
    </source>
</reference>
<name>RS6_MYCLE</name>
<organism>
    <name type="scientific">Mycobacterium leprae (strain TN)</name>
    <dbReference type="NCBI Taxonomy" id="272631"/>
    <lineage>
        <taxon>Bacteria</taxon>
        <taxon>Bacillati</taxon>
        <taxon>Actinomycetota</taxon>
        <taxon>Actinomycetes</taxon>
        <taxon>Mycobacteriales</taxon>
        <taxon>Mycobacteriaceae</taxon>
        <taxon>Mycobacterium</taxon>
    </lineage>
</organism>
<protein>
    <recommendedName>
        <fullName evidence="2">Small ribosomal subunit protein bS6</fullName>
    </recommendedName>
    <alternativeName>
        <fullName>30S ribosomal protein S6</fullName>
    </alternativeName>
</protein>
<feature type="chain" id="PRO_0000176796" description="Small ribosomal subunit protein bS6">
    <location>
        <begin position="1"/>
        <end position="96"/>
    </location>
</feature>
<evidence type="ECO:0000250" key="1"/>
<evidence type="ECO:0000305" key="2"/>